<feature type="chain" id="PRO_0000291062" description="UPF0434 protein BAV2101">
    <location>
        <begin position="1"/>
        <end position="63"/>
    </location>
</feature>
<comment type="similarity">
    <text evidence="1">Belongs to the UPF0434 family.</text>
</comment>
<protein>
    <recommendedName>
        <fullName evidence="1">UPF0434 protein BAV2101</fullName>
    </recommendedName>
</protein>
<gene>
    <name type="ordered locus">BAV2101</name>
</gene>
<evidence type="ECO:0000255" key="1">
    <source>
        <dbReference type="HAMAP-Rule" id="MF_01187"/>
    </source>
</evidence>
<keyword id="KW-1185">Reference proteome</keyword>
<accession>Q2KZE7</accession>
<name>Y2101_BORA1</name>
<organism>
    <name type="scientific">Bordetella avium (strain 197N)</name>
    <dbReference type="NCBI Taxonomy" id="360910"/>
    <lineage>
        <taxon>Bacteria</taxon>
        <taxon>Pseudomonadati</taxon>
        <taxon>Pseudomonadota</taxon>
        <taxon>Betaproteobacteria</taxon>
        <taxon>Burkholderiales</taxon>
        <taxon>Alcaligenaceae</taxon>
        <taxon>Bordetella</taxon>
    </lineage>
</organism>
<dbReference type="EMBL" id="AM167904">
    <property type="protein sequence ID" value="CAJ49711.1"/>
    <property type="molecule type" value="Genomic_DNA"/>
</dbReference>
<dbReference type="RefSeq" id="WP_012417767.1">
    <property type="nucleotide sequence ID" value="NC_010645.1"/>
</dbReference>
<dbReference type="SMR" id="Q2KZE7"/>
<dbReference type="STRING" id="360910.BAV2101"/>
<dbReference type="GeneID" id="92934840"/>
<dbReference type="KEGG" id="bav:BAV2101"/>
<dbReference type="eggNOG" id="COG2835">
    <property type="taxonomic scope" value="Bacteria"/>
</dbReference>
<dbReference type="HOGENOM" id="CLU_155659_3_1_4"/>
<dbReference type="OrthoDB" id="9812205at2"/>
<dbReference type="Proteomes" id="UP000001977">
    <property type="component" value="Chromosome"/>
</dbReference>
<dbReference type="GO" id="GO:0005829">
    <property type="term" value="C:cytosol"/>
    <property type="evidence" value="ECO:0007669"/>
    <property type="project" value="TreeGrafter"/>
</dbReference>
<dbReference type="FunFam" id="2.20.25.10:FF:000002">
    <property type="entry name" value="UPF0434 protein YcaR"/>
    <property type="match status" value="1"/>
</dbReference>
<dbReference type="Gene3D" id="2.20.25.10">
    <property type="match status" value="1"/>
</dbReference>
<dbReference type="HAMAP" id="MF_01187">
    <property type="entry name" value="UPF0434"/>
    <property type="match status" value="1"/>
</dbReference>
<dbReference type="InterPro" id="IPR005651">
    <property type="entry name" value="Trm112-like"/>
</dbReference>
<dbReference type="PANTHER" id="PTHR33505:SF4">
    <property type="entry name" value="PROTEIN PREY, MITOCHONDRIAL"/>
    <property type="match status" value="1"/>
</dbReference>
<dbReference type="PANTHER" id="PTHR33505">
    <property type="entry name" value="ZGC:162634"/>
    <property type="match status" value="1"/>
</dbReference>
<dbReference type="Pfam" id="PF03966">
    <property type="entry name" value="Trm112p"/>
    <property type="match status" value="1"/>
</dbReference>
<dbReference type="SUPFAM" id="SSF158997">
    <property type="entry name" value="Trm112p-like"/>
    <property type="match status" value="1"/>
</dbReference>
<reference key="1">
    <citation type="journal article" date="2006" name="J. Bacteriol.">
        <title>Comparison of the genome sequence of the poultry pathogen Bordetella avium with those of B. bronchiseptica, B. pertussis, and B. parapertussis reveals extensive diversity in surface structures associated with host interaction.</title>
        <authorList>
            <person name="Sebaihia M."/>
            <person name="Preston A."/>
            <person name="Maskell D.J."/>
            <person name="Kuzmiak H."/>
            <person name="Connell T.D."/>
            <person name="King N.D."/>
            <person name="Orndorff P.E."/>
            <person name="Miyamoto D.M."/>
            <person name="Thomson N.R."/>
            <person name="Harris D."/>
            <person name="Goble A."/>
            <person name="Lord A."/>
            <person name="Murphy L."/>
            <person name="Quail M.A."/>
            <person name="Rutter S."/>
            <person name="Squares R."/>
            <person name="Squares S."/>
            <person name="Woodward J."/>
            <person name="Parkhill J."/>
            <person name="Temple L.M."/>
        </authorList>
    </citation>
    <scope>NUCLEOTIDE SEQUENCE [LARGE SCALE GENOMIC DNA]</scope>
    <source>
        <strain>197N</strain>
    </source>
</reference>
<proteinExistence type="inferred from homology"/>
<sequence>MESRLLDILVCPLCKGRLEFLRAQDELVCHADRLAFPVRDGIPVMLESAARPLDAPADTAHAS</sequence>